<name>GATC_FUSNN</name>
<reference key="1">
    <citation type="journal article" date="2002" name="J. Bacteriol.">
        <title>Genome sequence and analysis of the oral bacterium Fusobacterium nucleatum strain ATCC 25586.</title>
        <authorList>
            <person name="Kapatral V."/>
            <person name="Anderson I."/>
            <person name="Ivanova N."/>
            <person name="Reznik G."/>
            <person name="Los T."/>
            <person name="Lykidis A."/>
            <person name="Bhattacharyya A."/>
            <person name="Bartman A."/>
            <person name="Gardner W."/>
            <person name="Grechkin G."/>
            <person name="Zhu L."/>
            <person name="Vasieva O."/>
            <person name="Chu L."/>
            <person name="Kogan Y."/>
            <person name="Chaga O."/>
            <person name="Goltsman E."/>
            <person name="Bernal A."/>
            <person name="Larsen N."/>
            <person name="D'Souza M."/>
            <person name="Walunas T."/>
            <person name="Pusch G."/>
            <person name="Haselkorn R."/>
            <person name="Fonstein M."/>
            <person name="Kyrpides N.C."/>
            <person name="Overbeek R."/>
        </authorList>
    </citation>
    <scope>NUCLEOTIDE SEQUENCE [LARGE SCALE GENOMIC DNA]</scope>
    <source>
        <strain>ATCC 25586 / DSM 15643 / BCRC 10681 / CIP 101130 / JCM 8532 / KCTC 2640 / LMG 13131 / VPI 4355</strain>
    </source>
</reference>
<accession>Q8R678</accession>
<feature type="chain" id="PRO_0000105299" description="Aspartyl/glutamyl-tRNA(Asn/Gln) amidotransferase subunit C">
    <location>
        <begin position="1"/>
        <end position="96"/>
    </location>
</feature>
<organism>
    <name type="scientific">Fusobacterium nucleatum subsp. nucleatum (strain ATCC 25586 / DSM 15643 / BCRC 10681 / CIP 101130 / JCM 8532 / KCTC 2640 / LMG 13131 / VPI 4355)</name>
    <dbReference type="NCBI Taxonomy" id="190304"/>
    <lineage>
        <taxon>Bacteria</taxon>
        <taxon>Fusobacteriati</taxon>
        <taxon>Fusobacteriota</taxon>
        <taxon>Fusobacteriia</taxon>
        <taxon>Fusobacteriales</taxon>
        <taxon>Fusobacteriaceae</taxon>
        <taxon>Fusobacterium</taxon>
    </lineage>
</organism>
<protein>
    <recommendedName>
        <fullName evidence="1">Aspartyl/glutamyl-tRNA(Asn/Gln) amidotransferase subunit C</fullName>
        <shortName evidence="1">Asp/Glu-ADT subunit C</shortName>
        <ecNumber evidence="1">6.3.5.-</ecNumber>
    </recommendedName>
</protein>
<evidence type="ECO:0000255" key="1">
    <source>
        <dbReference type="HAMAP-Rule" id="MF_00122"/>
    </source>
</evidence>
<proteinExistence type="inferred from homology"/>
<gene>
    <name evidence="1" type="primary">gatC</name>
    <name type="ordered locus">FN0755</name>
</gene>
<dbReference type="EC" id="6.3.5.-" evidence="1"/>
<dbReference type="EMBL" id="AE009951">
    <property type="protein sequence ID" value="AAL94951.1"/>
    <property type="molecule type" value="Genomic_DNA"/>
</dbReference>
<dbReference type="RefSeq" id="NP_603652.1">
    <property type="nucleotide sequence ID" value="NC_003454.1"/>
</dbReference>
<dbReference type="RefSeq" id="WP_005903491.1">
    <property type="nucleotide sequence ID" value="NZ_OZ209243.1"/>
</dbReference>
<dbReference type="SMR" id="Q8R678"/>
<dbReference type="FunCoup" id="Q8R678">
    <property type="interactions" value="359"/>
</dbReference>
<dbReference type="STRING" id="190304.FN0755"/>
<dbReference type="PaxDb" id="190304-FN0755"/>
<dbReference type="EnsemblBacteria" id="AAL94951">
    <property type="protein sequence ID" value="AAL94951"/>
    <property type="gene ID" value="FN0755"/>
</dbReference>
<dbReference type="GeneID" id="79783747"/>
<dbReference type="KEGG" id="fnu:FN0755"/>
<dbReference type="PATRIC" id="fig|190304.8.peg.1318"/>
<dbReference type="eggNOG" id="COG0721">
    <property type="taxonomic scope" value="Bacteria"/>
</dbReference>
<dbReference type="HOGENOM" id="CLU_105899_1_2_0"/>
<dbReference type="InParanoid" id="Q8R678"/>
<dbReference type="BioCyc" id="FNUC190304:G1FZS-1341-MONOMER"/>
<dbReference type="Proteomes" id="UP000002521">
    <property type="component" value="Chromosome"/>
</dbReference>
<dbReference type="GO" id="GO:0050566">
    <property type="term" value="F:asparaginyl-tRNA synthase (glutamine-hydrolyzing) activity"/>
    <property type="evidence" value="ECO:0007669"/>
    <property type="project" value="RHEA"/>
</dbReference>
<dbReference type="GO" id="GO:0005524">
    <property type="term" value="F:ATP binding"/>
    <property type="evidence" value="ECO:0007669"/>
    <property type="project" value="UniProtKB-KW"/>
</dbReference>
<dbReference type="GO" id="GO:0050567">
    <property type="term" value="F:glutaminyl-tRNA synthase (glutamine-hydrolyzing) activity"/>
    <property type="evidence" value="ECO:0007669"/>
    <property type="project" value="UniProtKB-UniRule"/>
</dbReference>
<dbReference type="GO" id="GO:0070681">
    <property type="term" value="P:glutaminyl-tRNAGln biosynthesis via transamidation"/>
    <property type="evidence" value="ECO:0000318"/>
    <property type="project" value="GO_Central"/>
</dbReference>
<dbReference type="GO" id="GO:0006450">
    <property type="term" value="P:regulation of translational fidelity"/>
    <property type="evidence" value="ECO:0007669"/>
    <property type="project" value="InterPro"/>
</dbReference>
<dbReference type="GO" id="GO:0006412">
    <property type="term" value="P:translation"/>
    <property type="evidence" value="ECO:0007669"/>
    <property type="project" value="UniProtKB-UniRule"/>
</dbReference>
<dbReference type="Gene3D" id="1.10.20.60">
    <property type="entry name" value="Glu-tRNAGln amidotransferase C subunit, N-terminal domain"/>
    <property type="match status" value="1"/>
</dbReference>
<dbReference type="HAMAP" id="MF_00122">
    <property type="entry name" value="GatC"/>
    <property type="match status" value="1"/>
</dbReference>
<dbReference type="InterPro" id="IPR036113">
    <property type="entry name" value="Asp/Glu-ADT_sf_sub_c"/>
</dbReference>
<dbReference type="InterPro" id="IPR003837">
    <property type="entry name" value="GatC"/>
</dbReference>
<dbReference type="NCBIfam" id="TIGR00135">
    <property type="entry name" value="gatC"/>
    <property type="match status" value="1"/>
</dbReference>
<dbReference type="PANTHER" id="PTHR15004">
    <property type="entry name" value="GLUTAMYL-TRNA(GLN) AMIDOTRANSFERASE SUBUNIT C, MITOCHONDRIAL"/>
    <property type="match status" value="1"/>
</dbReference>
<dbReference type="PANTHER" id="PTHR15004:SF0">
    <property type="entry name" value="GLUTAMYL-TRNA(GLN) AMIDOTRANSFERASE SUBUNIT C, MITOCHONDRIAL"/>
    <property type="match status" value="1"/>
</dbReference>
<dbReference type="Pfam" id="PF02686">
    <property type="entry name" value="GatC"/>
    <property type="match status" value="1"/>
</dbReference>
<dbReference type="SUPFAM" id="SSF141000">
    <property type="entry name" value="Glu-tRNAGln amidotransferase C subunit"/>
    <property type="match status" value="1"/>
</dbReference>
<keyword id="KW-0067">ATP-binding</keyword>
<keyword id="KW-0436">Ligase</keyword>
<keyword id="KW-0547">Nucleotide-binding</keyword>
<keyword id="KW-0648">Protein biosynthesis</keyword>
<keyword id="KW-1185">Reference proteome</keyword>
<sequence length="96" mass="11054">MALTREEVLKIAKLSKLSFEDKEIEKFQVELNDILKYIDMLNEVDTSKVEPLVYINESVNNFREKEEKPSLEIEKVLFNAPESAENAIVVPKVIGE</sequence>
<comment type="function">
    <text evidence="1">Allows the formation of correctly charged Asn-tRNA(Asn) or Gln-tRNA(Gln) through the transamidation of misacylated Asp-tRNA(Asn) or Glu-tRNA(Gln) in organisms which lack either or both of asparaginyl-tRNA or glutaminyl-tRNA synthetases. The reaction takes place in the presence of glutamine and ATP through an activated phospho-Asp-tRNA(Asn) or phospho-Glu-tRNA(Gln).</text>
</comment>
<comment type="catalytic activity">
    <reaction evidence="1">
        <text>L-glutamyl-tRNA(Gln) + L-glutamine + ATP + H2O = L-glutaminyl-tRNA(Gln) + L-glutamate + ADP + phosphate + H(+)</text>
        <dbReference type="Rhea" id="RHEA:17521"/>
        <dbReference type="Rhea" id="RHEA-COMP:9681"/>
        <dbReference type="Rhea" id="RHEA-COMP:9684"/>
        <dbReference type="ChEBI" id="CHEBI:15377"/>
        <dbReference type="ChEBI" id="CHEBI:15378"/>
        <dbReference type="ChEBI" id="CHEBI:29985"/>
        <dbReference type="ChEBI" id="CHEBI:30616"/>
        <dbReference type="ChEBI" id="CHEBI:43474"/>
        <dbReference type="ChEBI" id="CHEBI:58359"/>
        <dbReference type="ChEBI" id="CHEBI:78520"/>
        <dbReference type="ChEBI" id="CHEBI:78521"/>
        <dbReference type="ChEBI" id="CHEBI:456216"/>
    </reaction>
</comment>
<comment type="catalytic activity">
    <reaction evidence="1">
        <text>L-aspartyl-tRNA(Asn) + L-glutamine + ATP + H2O = L-asparaginyl-tRNA(Asn) + L-glutamate + ADP + phosphate + 2 H(+)</text>
        <dbReference type="Rhea" id="RHEA:14513"/>
        <dbReference type="Rhea" id="RHEA-COMP:9674"/>
        <dbReference type="Rhea" id="RHEA-COMP:9677"/>
        <dbReference type="ChEBI" id="CHEBI:15377"/>
        <dbReference type="ChEBI" id="CHEBI:15378"/>
        <dbReference type="ChEBI" id="CHEBI:29985"/>
        <dbReference type="ChEBI" id="CHEBI:30616"/>
        <dbReference type="ChEBI" id="CHEBI:43474"/>
        <dbReference type="ChEBI" id="CHEBI:58359"/>
        <dbReference type="ChEBI" id="CHEBI:78515"/>
        <dbReference type="ChEBI" id="CHEBI:78516"/>
        <dbReference type="ChEBI" id="CHEBI:456216"/>
    </reaction>
</comment>
<comment type="subunit">
    <text evidence="1">Heterotrimer of A, B and C subunits.</text>
</comment>
<comment type="similarity">
    <text evidence="1">Belongs to the GatC family.</text>
</comment>